<gene>
    <name type="primary">Sirt2</name>
    <name type="synonym">Sir2l2</name>
</gene>
<protein>
    <recommendedName>
        <fullName>NAD-dependent protein deacetylase sirtuin-2</fullName>
        <ecNumber evidence="4 11">2.3.1.286</ecNumber>
    </recommendedName>
    <alternativeName>
        <fullName evidence="10">NAD-dependent protein defatty-acylase sirtuin-2</fullName>
        <ecNumber evidence="2">2.3.1.-</ecNumber>
    </alternativeName>
    <alternativeName>
        <fullName>Regulatory protein SIR2 homolog 2</fullName>
    </alternativeName>
    <alternativeName>
        <fullName>SIR2-like protein 2</fullName>
    </alternativeName>
</protein>
<accession>Q5RJQ4</accession>
<name>SIR2_RAT</name>
<reference key="1">
    <citation type="journal article" date="2004" name="Genome Res.">
        <title>The status, quality, and expansion of the NIH full-length cDNA project: the Mammalian Gene Collection (MGC).</title>
        <authorList>
            <consortium name="The MGC Project Team"/>
        </authorList>
    </citation>
    <scope>NUCLEOTIDE SEQUENCE [LARGE SCALE MRNA]</scope>
    <source>
        <tissue>Testis</tissue>
    </source>
</reference>
<reference key="2">
    <citation type="submission" date="2007-07" db="UniProtKB">
        <authorList>
            <person name="Lubec G."/>
            <person name="Afjehi-Sadat L."/>
            <person name="Chen W.-Q."/>
            <person name="Kang S.U."/>
        </authorList>
    </citation>
    <scope>PROTEIN SEQUENCE OF 6-18; 21-32; 41-116; 176-183; 187-216; 239-245; 302-308 AND 310-332</scope>
    <scope>IDENTIFICATION BY MASS SPECTROMETRY</scope>
    <source>
        <strain>Sprague-Dawley</strain>
        <tissue>Brain</tissue>
        <tissue>Hippocampus</tissue>
        <tissue>Spinal cord</tissue>
    </source>
</reference>
<reference key="3">
    <citation type="journal article" date="2002" name="J. Neurochem.">
        <title>A novel seven transmembrane receptor induced during the early steps of astrocyte differentiation identified by differential expression.</title>
        <authorList>
            <person name="De Smet C."/>
            <person name="Nishimori H."/>
            <person name="Furnari F.B."/>
            <person name="Boegler O."/>
            <person name="Huang H.-J.S."/>
            <person name="Cavenee W.K."/>
        </authorList>
    </citation>
    <scope>INDUCTION</scope>
</reference>
<reference key="4">
    <citation type="journal article" date="2007" name="J. Neurosci.">
        <title>Sirtuin 2, a mammalian homolog of yeast silent information regulator-2 longevity regulator, is an oligodendroglial protein that decelerates cell differentiation through deacetylating alpha-tubulin.</title>
        <authorList>
            <person name="Li W."/>
            <person name="Zhang B."/>
            <person name="Tang J."/>
            <person name="Cao Q."/>
            <person name="Wu Y."/>
            <person name="Wu C."/>
            <person name="Guo J."/>
            <person name="Ling E.A."/>
            <person name="Liang F."/>
        </authorList>
    </citation>
    <scope>FUNCTION IN DEACETYLATION OF ALPHA TUBULIN</scope>
    <scope>FUNCTION AS REGULATOR OF OLIGODENDROCYTE DIFFERENTIATION</scope>
    <scope>SUBCELLULAR LOCATION</scope>
    <scope>TISSUE SPECIFICITY</scope>
    <scope>MUTAGENESIS OF ASN-131; ASP-133 AND HIS-150</scope>
</reference>
<reference key="5">
    <citation type="journal article" date="2011" name="Proc. Natl. Acad. Sci. U.S.A.">
        <title>Sir-two-homolog 2 (Sirt2) modulates peripheral myelination through polarity protein Par-3/atypical protein kinase C (aPKC) signaling.</title>
        <authorList>
            <person name="Beirowski B."/>
            <person name="Gustin J."/>
            <person name="Armour S.M."/>
            <person name="Yamamoto H."/>
            <person name="Viader A."/>
            <person name="North B.J."/>
            <person name="Michan S."/>
            <person name="Baloh R.H."/>
            <person name="Golden J.P."/>
            <person name="Schmidt R.E."/>
            <person name="Sinclair D.A."/>
            <person name="Auwerx J."/>
            <person name="Milbrandt J."/>
        </authorList>
    </citation>
    <scope>FUNCTION IN REGULATION OF PERIPHERAL MYELINATION</scope>
    <scope>SUBCELLULAR LOCATION</scope>
    <scope>TISSUE SPECIFICITY</scope>
</reference>
<reference key="6">
    <citation type="journal article" date="2012" name="Nat. Commun.">
        <title>Quantitative maps of protein phosphorylation sites across 14 different rat organs and tissues.</title>
        <authorList>
            <person name="Lundby A."/>
            <person name="Secher A."/>
            <person name="Lage K."/>
            <person name="Nordsborg N.B."/>
            <person name="Dmytriyev A."/>
            <person name="Lundby C."/>
            <person name="Olsen J.V."/>
        </authorList>
    </citation>
    <scope>PHOSPHORYLATION [LARGE SCALE ANALYSIS] AT SER-16; SER-63; SER-170 AND SER-330</scope>
    <scope>IDENTIFICATION BY MASS SPECTROMETRY [LARGE SCALE ANALYSIS]</scope>
</reference>
<reference key="7">
    <citation type="journal article" date="2012" name="Transl. Cancer Res.">
        <title>SIRT2 is a tumor suppressor that connects aging, acetylome, cell cycle signaling, and carcinogenesis.</title>
        <authorList>
            <person name="Park S.H."/>
            <person name="Zhu Y."/>
            <person name="Ozden O."/>
            <person name="Kim H.S."/>
            <person name="Jiang H."/>
            <person name="Deng C.X."/>
            <person name="Gius D."/>
            <person name="Vassilopoulos A."/>
        </authorList>
    </citation>
    <scope>REVIEW</scope>
    <scope>FUNCTION AS A TUMOR SUPPRESSOR</scope>
</reference>
<dbReference type="EC" id="2.3.1.286" evidence="4 11"/>
<dbReference type="EC" id="2.3.1.-" evidence="2"/>
<dbReference type="EMBL" id="BC086545">
    <property type="protein sequence ID" value="AAH86545.1"/>
    <property type="molecule type" value="mRNA"/>
</dbReference>
<dbReference type="RefSeq" id="NP_001008369.1">
    <property type="nucleotide sequence ID" value="NM_001008368.1"/>
</dbReference>
<dbReference type="SMR" id="Q5RJQ4"/>
<dbReference type="BioGRID" id="262752">
    <property type="interactions" value="2"/>
</dbReference>
<dbReference type="FunCoup" id="Q5RJQ4">
    <property type="interactions" value="2083"/>
</dbReference>
<dbReference type="IntAct" id="Q5RJQ4">
    <property type="interactions" value="1"/>
</dbReference>
<dbReference type="MINT" id="Q5RJQ4"/>
<dbReference type="STRING" id="10116.ENSRNOP00000069934"/>
<dbReference type="ChEMBL" id="CHEMBL3232690"/>
<dbReference type="iPTMnet" id="Q5RJQ4"/>
<dbReference type="PhosphoSitePlus" id="Q5RJQ4"/>
<dbReference type="SwissPalm" id="Q5RJQ4"/>
<dbReference type="jPOST" id="Q5RJQ4"/>
<dbReference type="PaxDb" id="10116-ENSRNOP00000059450"/>
<dbReference type="UCSC" id="RGD:621481">
    <property type="organism name" value="rat"/>
</dbReference>
<dbReference type="AGR" id="RGD:621481"/>
<dbReference type="RGD" id="621481">
    <property type="gene designation" value="Sirt2"/>
</dbReference>
<dbReference type="VEuPathDB" id="HostDB:ENSRNOG00000020102"/>
<dbReference type="eggNOG" id="KOG2682">
    <property type="taxonomic scope" value="Eukaryota"/>
</dbReference>
<dbReference type="HOGENOM" id="CLU_023643_7_4_1"/>
<dbReference type="InParanoid" id="Q5RJQ4"/>
<dbReference type="Reactome" id="R-RNO-2995383">
    <property type="pathway name" value="Initiation of Nuclear Envelope (NE) Reformation"/>
</dbReference>
<dbReference type="PRO" id="PR:Q5RJQ4"/>
<dbReference type="Proteomes" id="UP000002494">
    <property type="component" value="Chromosome 1"/>
</dbReference>
<dbReference type="Bgee" id="ENSRNOG00000020102">
    <property type="expression patterns" value="Expressed in testis and 19 other cell types or tissues"/>
</dbReference>
<dbReference type="ExpressionAtlas" id="Q5RJQ4">
    <property type="expression patterns" value="baseline and differential"/>
</dbReference>
<dbReference type="GO" id="GO:0005814">
    <property type="term" value="C:centriole"/>
    <property type="evidence" value="ECO:0000250"/>
    <property type="project" value="UniProtKB"/>
</dbReference>
<dbReference type="GO" id="GO:0005813">
    <property type="term" value="C:centrosome"/>
    <property type="evidence" value="ECO:0000250"/>
    <property type="project" value="UniProtKB"/>
</dbReference>
<dbReference type="GO" id="GO:0005694">
    <property type="term" value="C:chromosome"/>
    <property type="evidence" value="ECO:0000250"/>
    <property type="project" value="UniProtKB"/>
</dbReference>
<dbReference type="GO" id="GO:0005737">
    <property type="term" value="C:cytoplasm"/>
    <property type="evidence" value="ECO:0000250"/>
    <property type="project" value="UniProtKB"/>
</dbReference>
<dbReference type="GO" id="GO:0005829">
    <property type="term" value="C:cytosol"/>
    <property type="evidence" value="ECO:0000250"/>
    <property type="project" value="UniProtKB"/>
</dbReference>
<dbReference type="GO" id="GO:0097386">
    <property type="term" value="C:glial cell projection"/>
    <property type="evidence" value="ECO:0000314"/>
    <property type="project" value="UniProtKB"/>
</dbReference>
<dbReference type="GO" id="GO:0098978">
    <property type="term" value="C:glutamatergic synapse"/>
    <property type="evidence" value="ECO:0000314"/>
    <property type="project" value="SynGO"/>
</dbReference>
<dbReference type="GO" id="GO:0030426">
    <property type="term" value="C:growth cone"/>
    <property type="evidence" value="ECO:0007669"/>
    <property type="project" value="UniProtKB-SubCell"/>
</dbReference>
<dbReference type="GO" id="GO:0000792">
    <property type="term" value="C:heterochromatin"/>
    <property type="evidence" value="ECO:0000314"/>
    <property type="project" value="UniProtKB"/>
</dbReference>
<dbReference type="GO" id="GO:0044224">
    <property type="term" value="C:juxtaparanode region of axon"/>
    <property type="evidence" value="ECO:0000314"/>
    <property type="project" value="UniProtKB"/>
</dbReference>
<dbReference type="GO" id="GO:0043219">
    <property type="term" value="C:lateral loop"/>
    <property type="evidence" value="ECO:0000314"/>
    <property type="project" value="UniProtKB"/>
</dbReference>
<dbReference type="GO" id="GO:0072687">
    <property type="term" value="C:meiotic spindle"/>
    <property type="evidence" value="ECO:0000250"/>
    <property type="project" value="UniProtKB"/>
</dbReference>
<dbReference type="GO" id="GO:0005874">
    <property type="term" value="C:microtubule"/>
    <property type="evidence" value="ECO:0000266"/>
    <property type="project" value="RGD"/>
</dbReference>
<dbReference type="GO" id="GO:0030496">
    <property type="term" value="C:midbody"/>
    <property type="evidence" value="ECO:0000250"/>
    <property type="project" value="UniProtKB"/>
</dbReference>
<dbReference type="GO" id="GO:0005739">
    <property type="term" value="C:mitochondrion"/>
    <property type="evidence" value="ECO:0000266"/>
    <property type="project" value="RGD"/>
</dbReference>
<dbReference type="GO" id="GO:0072686">
    <property type="term" value="C:mitotic spindle"/>
    <property type="evidence" value="ECO:0000250"/>
    <property type="project" value="UniProtKB"/>
</dbReference>
<dbReference type="GO" id="GO:0043209">
    <property type="term" value="C:myelin sheath"/>
    <property type="evidence" value="ECO:0000314"/>
    <property type="project" value="UniProtKB"/>
</dbReference>
<dbReference type="GO" id="GO:0035748">
    <property type="term" value="C:myelin sheath abaxonal region"/>
    <property type="evidence" value="ECO:0000314"/>
    <property type="project" value="RGD"/>
</dbReference>
<dbReference type="GO" id="GO:0005634">
    <property type="term" value="C:nucleus"/>
    <property type="evidence" value="ECO:0000250"/>
    <property type="project" value="UniProtKB"/>
</dbReference>
<dbReference type="GO" id="GO:0033010">
    <property type="term" value="C:paranodal junction"/>
    <property type="evidence" value="ECO:0000314"/>
    <property type="project" value="UniProtKB"/>
</dbReference>
<dbReference type="GO" id="GO:0033270">
    <property type="term" value="C:paranode region of axon"/>
    <property type="evidence" value="ECO:0000314"/>
    <property type="project" value="UniProtKB"/>
</dbReference>
<dbReference type="GO" id="GO:0043204">
    <property type="term" value="C:perikaryon"/>
    <property type="evidence" value="ECO:0000314"/>
    <property type="project" value="UniProtKB"/>
</dbReference>
<dbReference type="GO" id="GO:0048471">
    <property type="term" value="C:perinuclear region of cytoplasm"/>
    <property type="evidence" value="ECO:0000250"/>
    <property type="project" value="UniProtKB"/>
</dbReference>
<dbReference type="GO" id="GO:0005886">
    <property type="term" value="C:plasma membrane"/>
    <property type="evidence" value="ECO:0007669"/>
    <property type="project" value="UniProtKB-KW"/>
</dbReference>
<dbReference type="GO" id="GO:0043220">
    <property type="term" value="C:Schmidt-Lanterman incisure"/>
    <property type="evidence" value="ECO:0000314"/>
    <property type="project" value="UniProtKB"/>
</dbReference>
<dbReference type="GO" id="GO:0005819">
    <property type="term" value="C:spindle"/>
    <property type="evidence" value="ECO:0000250"/>
    <property type="project" value="UniProtKB"/>
</dbReference>
<dbReference type="GO" id="GO:0097456">
    <property type="term" value="C:terminal loop"/>
    <property type="evidence" value="ECO:0000314"/>
    <property type="project" value="RGD"/>
</dbReference>
<dbReference type="GO" id="GO:0003682">
    <property type="term" value="F:chromatin binding"/>
    <property type="evidence" value="ECO:0000250"/>
    <property type="project" value="UniProtKB"/>
</dbReference>
<dbReference type="GO" id="GO:0140297">
    <property type="term" value="F:DNA-binding transcription factor binding"/>
    <property type="evidence" value="ECO:0000266"/>
    <property type="project" value="RGD"/>
</dbReference>
<dbReference type="GO" id="GO:0035035">
    <property type="term" value="F:histone acetyltransferase binding"/>
    <property type="evidence" value="ECO:0000266"/>
    <property type="project" value="RGD"/>
</dbReference>
<dbReference type="GO" id="GO:0004407">
    <property type="term" value="F:histone deacetylase activity"/>
    <property type="evidence" value="ECO:0000250"/>
    <property type="project" value="UniProtKB"/>
</dbReference>
<dbReference type="GO" id="GO:0017136">
    <property type="term" value="F:histone deacetylase activity, NAD-dependent"/>
    <property type="evidence" value="ECO:0000266"/>
    <property type="project" value="RGD"/>
</dbReference>
<dbReference type="GO" id="GO:0042826">
    <property type="term" value="F:histone deacetylase binding"/>
    <property type="evidence" value="ECO:0000266"/>
    <property type="project" value="RGD"/>
</dbReference>
<dbReference type="GO" id="GO:0046970">
    <property type="term" value="F:histone H4K16 deacetylase activity, NAD-dependent"/>
    <property type="evidence" value="ECO:0000250"/>
    <property type="project" value="UniProtKB"/>
</dbReference>
<dbReference type="GO" id="GO:0070403">
    <property type="term" value="F:NAD+ binding"/>
    <property type="evidence" value="ECO:0000266"/>
    <property type="project" value="RGD"/>
</dbReference>
<dbReference type="GO" id="GO:0003950">
    <property type="term" value="F:NAD+ poly-ADP-ribosyltransferase activity"/>
    <property type="evidence" value="ECO:0000266"/>
    <property type="project" value="RGD"/>
</dbReference>
<dbReference type="GO" id="GO:0140773">
    <property type="term" value="F:NAD-dependent protein demyristoylase activity"/>
    <property type="evidence" value="ECO:0000250"/>
    <property type="project" value="UniProtKB"/>
</dbReference>
<dbReference type="GO" id="GO:0140774">
    <property type="term" value="F:NAD-dependent protein depalmitoylase activity"/>
    <property type="evidence" value="ECO:0000250"/>
    <property type="project" value="UniProtKB"/>
</dbReference>
<dbReference type="GO" id="GO:0034979">
    <property type="term" value="F:NAD-dependent protein lysine deacetylase activity"/>
    <property type="evidence" value="ECO:0000314"/>
    <property type="project" value="UniProtKB"/>
</dbReference>
<dbReference type="GO" id="GO:0033558">
    <property type="term" value="F:protein lysine deacetylase activity"/>
    <property type="evidence" value="ECO:0000250"/>
    <property type="project" value="UniProtKB"/>
</dbReference>
<dbReference type="GO" id="GO:0042903">
    <property type="term" value="F:tubulin deacetylase activity"/>
    <property type="evidence" value="ECO:0000314"/>
    <property type="project" value="UniProtKB"/>
</dbReference>
<dbReference type="GO" id="GO:0043130">
    <property type="term" value="F:ubiquitin binding"/>
    <property type="evidence" value="ECO:0000266"/>
    <property type="project" value="RGD"/>
</dbReference>
<dbReference type="GO" id="GO:0008270">
    <property type="term" value="F:zinc ion binding"/>
    <property type="evidence" value="ECO:0000266"/>
    <property type="project" value="RGD"/>
</dbReference>
<dbReference type="GO" id="GO:0006914">
    <property type="term" value="P:autophagy"/>
    <property type="evidence" value="ECO:0007669"/>
    <property type="project" value="UniProtKB-KW"/>
</dbReference>
<dbReference type="GO" id="GO:0051301">
    <property type="term" value="P:cell division"/>
    <property type="evidence" value="ECO:0007669"/>
    <property type="project" value="UniProtKB-KW"/>
</dbReference>
<dbReference type="GO" id="GO:0061433">
    <property type="term" value="P:cellular response to caloric restriction"/>
    <property type="evidence" value="ECO:0000250"/>
    <property type="project" value="UniProtKB"/>
</dbReference>
<dbReference type="GO" id="GO:0071872">
    <property type="term" value="P:cellular response to epinephrine stimulus"/>
    <property type="evidence" value="ECO:0000250"/>
    <property type="project" value="UniProtKB"/>
</dbReference>
<dbReference type="GO" id="GO:0071456">
    <property type="term" value="P:cellular response to hypoxia"/>
    <property type="evidence" value="ECO:0000250"/>
    <property type="project" value="UniProtKB"/>
</dbReference>
<dbReference type="GO" id="GO:0034599">
    <property type="term" value="P:cellular response to oxidative stress"/>
    <property type="evidence" value="ECO:0000250"/>
    <property type="project" value="UniProtKB"/>
</dbReference>
<dbReference type="GO" id="GO:0006325">
    <property type="term" value="P:chromatin organization"/>
    <property type="evidence" value="ECO:0000266"/>
    <property type="project" value="RGD"/>
</dbReference>
<dbReference type="GO" id="GO:0040029">
    <property type="term" value="P:epigenetic regulation of gene expression"/>
    <property type="evidence" value="ECO:0000250"/>
    <property type="project" value="UniProtKB"/>
</dbReference>
<dbReference type="GO" id="GO:0016042">
    <property type="term" value="P:lipid catabolic process"/>
    <property type="evidence" value="ECO:0000250"/>
    <property type="project" value="UniProtKB"/>
</dbReference>
<dbReference type="GO" id="GO:0051321">
    <property type="term" value="P:meiotic cell cycle"/>
    <property type="evidence" value="ECO:0007669"/>
    <property type="project" value="UniProtKB-KW"/>
</dbReference>
<dbReference type="GO" id="GO:0022011">
    <property type="term" value="P:myelination in peripheral nervous system"/>
    <property type="evidence" value="ECO:0000315"/>
    <property type="project" value="UniProtKB"/>
</dbReference>
<dbReference type="GO" id="GO:0043066">
    <property type="term" value="P:negative regulation of apoptotic process"/>
    <property type="evidence" value="ECO:0000315"/>
    <property type="project" value="RGD"/>
</dbReference>
<dbReference type="GO" id="GO:0010507">
    <property type="term" value="P:negative regulation of autophagy"/>
    <property type="evidence" value="ECO:0000250"/>
    <property type="project" value="UniProtKB"/>
</dbReference>
<dbReference type="GO" id="GO:0045892">
    <property type="term" value="P:negative regulation of DNA-templated transcription"/>
    <property type="evidence" value="ECO:0000266"/>
    <property type="project" value="RGD"/>
</dbReference>
<dbReference type="GO" id="GO:0045599">
    <property type="term" value="P:negative regulation of fat cell differentiation"/>
    <property type="evidence" value="ECO:0000250"/>
    <property type="project" value="UniProtKB"/>
</dbReference>
<dbReference type="GO" id="GO:1900226">
    <property type="term" value="P:negative regulation of NLRP3 inflammasome complex assembly"/>
    <property type="evidence" value="ECO:0000266"/>
    <property type="project" value="RGD"/>
</dbReference>
<dbReference type="GO" id="GO:0048715">
    <property type="term" value="P:negative regulation of oligodendrocyte differentiation"/>
    <property type="evidence" value="ECO:0000315"/>
    <property type="project" value="RGD"/>
</dbReference>
<dbReference type="GO" id="GO:0070446">
    <property type="term" value="P:negative regulation of oligodendrocyte progenitor proliferation"/>
    <property type="evidence" value="ECO:0000315"/>
    <property type="project" value="UniProtKB"/>
</dbReference>
<dbReference type="GO" id="GO:0010801">
    <property type="term" value="P:negative regulation of peptidyl-threonine phosphorylation"/>
    <property type="evidence" value="ECO:0000250"/>
    <property type="project" value="UniProtKB"/>
</dbReference>
<dbReference type="GO" id="GO:0042177">
    <property type="term" value="P:negative regulation of protein catabolic process"/>
    <property type="evidence" value="ECO:0000250"/>
    <property type="project" value="UniProtKB"/>
</dbReference>
<dbReference type="GO" id="GO:2000378">
    <property type="term" value="P:negative regulation of reactive oxygen species metabolic process"/>
    <property type="evidence" value="ECO:0000250"/>
    <property type="project" value="UniProtKB"/>
</dbReference>
<dbReference type="GO" id="GO:0045843">
    <property type="term" value="P:negative regulation of striated muscle tissue development"/>
    <property type="evidence" value="ECO:0000266"/>
    <property type="project" value="RGD"/>
</dbReference>
<dbReference type="GO" id="GO:0000122">
    <property type="term" value="P:negative regulation of transcription by RNA polymerase II"/>
    <property type="evidence" value="ECO:0000250"/>
    <property type="project" value="UniProtKB"/>
</dbReference>
<dbReference type="GO" id="GO:0044546">
    <property type="term" value="P:NLRP3 inflammasome complex assembly"/>
    <property type="evidence" value="ECO:0000266"/>
    <property type="project" value="RGD"/>
</dbReference>
<dbReference type="GO" id="GO:0034983">
    <property type="term" value="P:peptidyl-lysine deacetylation"/>
    <property type="evidence" value="ECO:0000250"/>
    <property type="project" value="UniProtKB"/>
</dbReference>
<dbReference type="GO" id="GO:0051987">
    <property type="term" value="P:positive regulation of attachment of spindle microtubules to kinetochore"/>
    <property type="evidence" value="ECO:0000250"/>
    <property type="project" value="UniProtKB"/>
</dbReference>
<dbReference type="GO" id="GO:0051781">
    <property type="term" value="P:positive regulation of cell division"/>
    <property type="evidence" value="ECO:0000250"/>
    <property type="project" value="UniProtKB"/>
</dbReference>
<dbReference type="GO" id="GO:0043388">
    <property type="term" value="P:positive regulation of DNA binding"/>
    <property type="evidence" value="ECO:0000250"/>
    <property type="project" value="UniProtKB"/>
</dbReference>
<dbReference type="GO" id="GO:1900119">
    <property type="term" value="P:positive regulation of execution phase of apoptosis"/>
    <property type="evidence" value="ECO:0000250"/>
    <property type="project" value="UniProtKB"/>
</dbReference>
<dbReference type="GO" id="GO:0045723">
    <property type="term" value="P:positive regulation of fatty acid biosynthetic process"/>
    <property type="evidence" value="ECO:0000266"/>
    <property type="project" value="RGD"/>
</dbReference>
<dbReference type="GO" id="GO:0045836">
    <property type="term" value="P:positive regulation of meiotic nuclear division"/>
    <property type="evidence" value="ECO:0000250"/>
    <property type="project" value="UniProtKB"/>
</dbReference>
<dbReference type="GO" id="GO:1900195">
    <property type="term" value="P:positive regulation of oocyte maturation"/>
    <property type="evidence" value="ECO:0000250"/>
    <property type="project" value="UniProtKB"/>
</dbReference>
<dbReference type="GO" id="GO:0032436">
    <property type="term" value="P:positive regulation of proteasomal ubiquitin-dependent protein catabolic process"/>
    <property type="evidence" value="ECO:0000250"/>
    <property type="project" value="UniProtKB"/>
</dbReference>
<dbReference type="GO" id="GO:0045944">
    <property type="term" value="P:positive regulation of transcription by RNA polymerase II"/>
    <property type="evidence" value="ECO:0000250"/>
    <property type="project" value="UniProtKB"/>
</dbReference>
<dbReference type="GO" id="GO:0043161">
    <property type="term" value="P:proteasome-mediated ubiquitin-dependent protein catabolic process"/>
    <property type="evidence" value="ECO:0000250"/>
    <property type="project" value="UniProtKB"/>
</dbReference>
<dbReference type="GO" id="GO:0006476">
    <property type="term" value="P:protein deacetylation"/>
    <property type="evidence" value="ECO:0000315"/>
    <property type="project" value="UniProtKB"/>
</dbReference>
<dbReference type="GO" id="GO:0000183">
    <property type="term" value="P:rDNA heterochromatin formation"/>
    <property type="evidence" value="ECO:0000318"/>
    <property type="project" value="GO_Central"/>
</dbReference>
<dbReference type="GO" id="GO:0051726">
    <property type="term" value="P:regulation of cell cycle"/>
    <property type="evidence" value="ECO:0000250"/>
    <property type="project" value="UniProtKB"/>
</dbReference>
<dbReference type="GO" id="GO:0045598">
    <property type="term" value="P:regulation of fat cell differentiation"/>
    <property type="evidence" value="ECO:0000266"/>
    <property type="project" value="RGD"/>
</dbReference>
<dbReference type="GO" id="GO:0031641">
    <property type="term" value="P:regulation of myelination"/>
    <property type="evidence" value="ECO:0000315"/>
    <property type="project" value="UniProtKB"/>
</dbReference>
<dbReference type="GO" id="GO:0099149">
    <property type="term" value="P:regulation of postsynaptic neurotransmitter receptor internalization"/>
    <property type="evidence" value="ECO:0000314"/>
    <property type="project" value="SynGO"/>
</dbReference>
<dbReference type="GO" id="GO:0042220">
    <property type="term" value="P:response to cocaine"/>
    <property type="evidence" value="ECO:0000270"/>
    <property type="project" value="RGD"/>
</dbReference>
<dbReference type="GO" id="GO:0090042">
    <property type="term" value="P:tubulin deacetylation"/>
    <property type="evidence" value="ECO:0000314"/>
    <property type="project" value="UniProtKB"/>
</dbReference>
<dbReference type="CDD" id="cd01408">
    <property type="entry name" value="SIRT1"/>
    <property type="match status" value="1"/>
</dbReference>
<dbReference type="FunFam" id="3.40.50.1220:FF:000005">
    <property type="entry name" value="NAD-dependent deacetylase sirtuin-2"/>
    <property type="match status" value="1"/>
</dbReference>
<dbReference type="FunFam" id="3.30.1600.10:FF:000013">
    <property type="entry name" value="NAD-dependent protein deacetylase sirtuin-1"/>
    <property type="match status" value="1"/>
</dbReference>
<dbReference type="Gene3D" id="3.30.1600.10">
    <property type="entry name" value="SIR2/SIRT2 'Small Domain"/>
    <property type="match status" value="1"/>
</dbReference>
<dbReference type="Gene3D" id="3.40.50.1220">
    <property type="entry name" value="TPP-binding domain"/>
    <property type="match status" value="1"/>
</dbReference>
<dbReference type="InterPro" id="IPR029035">
    <property type="entry name" value="DHS-like_NAD/FAD-binding_dom"/>
</dbReference>
<dbReference type="InterPro" id="IPR050134">
    <property type="entry name" value="NAD-dep_sirtuin_deacylases"/>
</dbReference>
<dbReference type="InterPro" id="IPR003000">
    <property type="entry name" value="Sirtuin"/>
</dbReference>
<dbReference type="InterPro" id="IPR026591">
    <property type="entry name" value="Sirtuin_cat_small_dom_sf"/>
</dbReference>
<dbReference type="InterPro" id="IPR017328">
    <property type="entry name" value="Sirtuin_class_I"/>
</dbReference>
<dbReference type="InterPro" id="IPR026590">
    <property type="entry name" value="Ssirtuin_cat_dom"/>
</dbReference>
<dbReference type="PANTHER" id="PTHR11085:SF6">
    <property type="entry name" value="NAD-DEPENDENT PROTEIN DEACETYLASE SIRTUIN-2"/>
    <property type="match status" value="1"/>
</dbReference>
<dbReference type="PANTHER" id="PTHR11085">
    <property type="entry name" value="NAD-DEPENDENT PROTEIN DEACYLASE SIRTUIN-5, MITOCHONDRIAL-RELATED"/>
    <property type="match status" value="1"/>
</dbReference>
<dbReference type="Pfam" id="PF02146">
    <property type="entry name" value="SIR2"/>
    <property type="match status" value="1"/>
</dbReference>
<dbReference type="PIRSF" id="PIRSF037938">
    <property type="entry name" value="SIR2_euk"/>
    <property type="match status" value="1"/>
</dbReference>
<dbReference type="SUPFAM" id="SSF52467">
    <property type="entry name" value="DHS-like NAD/FAD-binding domain"/>
    <property type="match status" value="1"/>
</dbReference>
<dbReference type="PROSITE" id="PS50305">
    <property type="entry name" value="SIRTUIN"/>
    <property type="match status" value="1"/>
</dbReference>
<feature type="chain" id="PRO_0000244536" description="NAD-dependent protein deacetylase sirtuin-2">
    <location>
        <begin position="1"/>
        <end position="350"/>
    </location>
</feature>
<feature type="domain" description="Deacetylase sirtuin-type" evidence="4">
    <location>
        <begin position="20"/>
        <end position="301"/>
    </location>
</feature>
<feature type="region of interest" description="Disordered" evidence="5">
    <location>
        <begin position="312"/>
        <end position="350"/>
    </location>
</feature>
<feature type="short sequence motif" description="Nuclear export signal" evidence="1">
    <location>
        <begin position="4"/>
        <end position="14"/>
    </location>
</feature>
<feature type="compositionally biased region" description="Polar residues" evidence="5">
    <location>
        <begin position="315"/>
        <end position="331"/>
    </location>
</feature>
<feature type="compositionally biased region" description="Basic and acidic residues" evidence="5">
    <location>
        <begin position="340"/>
        <end position="350"/>
    </location>
</feature>
<feature type="active site" description="Proton acceptor" evidence="4">
    <location>
        <position position="150"/>
    </location>
</feature>
<feature type="binding site" evidence="2">
    <location>
        <begin position="48"/>
        <end position="52"/>
    </location>
    <ligand>
        <name>NAD(+)</name>
        <dbReference type="ChEBI" id="CHEBI:57540"/>
    </ligand>
</feature>
<feature type="binding site" evidence="2">
    <location>
        <begin position="58"/>
        <end position="60"/>
    </location>
    <ligand>
        <name>NAD(+)</name>
        <dbReference type="ChEBI" id="CHEBI:57540"/>
    </ligand>
</feature>
<feature type="binding site" evidence="2">
    <location>
        <begin position="130"/>
        <end position="133"/>
    </location>
    <ligand>
        <name>NAD(+)</name>
        <dbReference type="ChEBI" id="CHEBI:57540"/>
    </ligand>
</feature>
<feature type="binding site" evidence="4">
    <location>
        <position position="158"/>
    </location>
    <ligand>
        <name>Zn(2+)</name>
        <dbReference type="ChEBI" id="CHEBI:29105"/>
    </ligand>
</feature>
<feature type="binding site" evidence="4">
    <location>
        <position position="163"/>
    </location>
    <ligand>
        <name>Zn(2+)</name>
        <dbReference type="ChEBI" id="CHEBI:29105"/>
    </ligand>
</feature>
<feature type="binding site" evidence="4">
    <location>
        <position position="184"/>
    </location>
    <ligand>
        <name>Zn(2+)</name>
        <dbReference type="ChEBI" id="CHEBI:29105"/>
    </ligand>
</feature>
<feature type="binding site" evidence="4">
    <location>
        <position position="187"/>
    </location>
    <ligand>
        <name>Zn(2+)</name>
        <dbReference type="ChEBI" id="CHEBI:29105"/>
    </ligand>
</feature>
<feature type="binding site" evidence="2">
    <location>
        <begin position="225"/>
        <end position="226"/>
    </location>
    <ligand>
        <name>NAD(+)</name>
        <dbReference type="ChEBI" id="CHEBI:57540"/>
    </ligand>
</feature>
<feature type="binding site" evidence="2">
    <location>
        <begin position="249"/>
        <end position="251"/>
    </location>
    <ligand>
        <name>NAD(+)</name>
        <dbReference type="ChEBI" id="CHEBI:57540"/>
    </ligand>
</feature>
<feature type="binding site" evidence="2">
    <location>
        <position position="287"/>
    </location>
    <ligand>
        <name>NAD(+)</name>
        <dbReference type="ChEBI" id="CHEBI:57540"/>
    </ligand>
</feature>
<feature type="modified residue" description="Phosphoserine" evidence="12">
    <location>
        <position position="16"/>
    </location>
</feature>
<feature type="modified residue" description="Phosphoserine" evidence="12">
    <location>
        <position position="63"/>
    </location>
</feature>
<feature type="modified residue" description="Phosphoserine" evidence="12">
    <location>
        <position position="170"/>
    </location>
</feature>
<feature type="modified residue" description="Phosphoserine" evidence="12">
    <location>
        <position position="330"/>
    </location>
</feature>
<feature type="modified residue" description="Phosphoserine" evidence="2">
    <location>
        <position position="334"/>
    </location>
</feature>
<feature type="mutagenesis site" description="Reduced deacetylase activity on alpha-tubulin and stimulates oligodendrocyte precursor (OLP) differentiation." evidence="7">
    <original>N</original>
    <variation>A</variation>
    <location>
        <position position="131"/>
    </location>
</feature>
<feature type="mutagenesis site" description="Reduced deacetylase activity on alpha-tubulin." evidence="7">
    <original>D</original>
    <variation>A</variation>
    <location>
        <position position="133"/>
    </location>
</feature>
<feature type="mutagenesis site" description="Reduced deacetylase activity on alpha-tubulin and stimulates oligodendrocyte precursor (OLP) differentiation." evidence="7">
    <original>H</original>
    <variation>A</variation>
    <location>
        <position position="150"/>
    </location>
</feature>
<comment type="function">
    <text evidence="2 3 7 8 9">NAD-dependent protein deacetylase, which deacetylates internal lysines on histone and alpha-tubulin as well as many other proteins such as key transcription factors (PubMed:17344398). Participates in the modulation of multiple and diverse biological processes such as cell cycle control, genomic integrity, microtubule dynamics, cell differentiation, metabolic networks, and autophagy. Plays a major role in the control of cell cycle progression and genomic stability. Functions in the antephase checkpoint preventing precocious mitotic entry in response to microtubule stress agents, and hence allowing proper inheritance of chromosomes. Positively regulates the anaphase promoting complex/cyclosome (APC/C) ubiquitin ligase complex activity by deacetylating CDC20 and FZR1, then allowing progression through mitosis. Associates both with chromatin at transcriptional start sites (TSSs) and enhancers of active genes. Plays a role in cell cycle and chromatin compaction through epigenetic modulation of the regulation of histone H4 'Lys-20' methylation (H4K20me1) during early mitosis. Specifically deacetylates histone H4 at 'Lys-16' (H4K16ac) between the G2/M transition and metaphase enabling H4K20me1 deposition by KMT5A leading to ulterior levels of H4K20me2 and H4K20me3 deposition throughout cell cycle, and mitotic S-phase progression. Deacetylates KMT5A modulating KMT5A chromatin localization during the mitotic stress response. Also deacetylates histone H3 at 'Lys-57' (H3K56ac) during the mitotic G2/M transition. During oocyte meiosis progression, may deacetylate histone H4 at 'Lys-16' (H4K16ac) and alpha-tubulin, regulating spindle assembly and chromosome alignment by influencing microtubule dynamics and kinetochore function. Deacetylates histone H4 at 'Lys-16' (H4K16ac) at the VEGFA promoter and thereby contributes to regulate expression of VEGFA, a key regulator of angiogenesis. Deacetylates alpha-tubulin at 'Lys-40' and hence controls neuronal motility, oligodendroglial cell arbor projection processes and proliferation of non-neuronal cells. Phosphorylation at Ser-368 by a G1/S-specific cyclin E-CDK2 complex inactivates SIRT2-mediated alpha-tubulin deacetylation, negatively regulating cell adhesion, cell migration and neurite outgrowth during neuronal differentiation. Deacetylates PARD3 and participates in the regulation of Schwann cell peripheral myelination formation during early postnatal development and during postinjury remyelination. Involved in several cellular metabolic pathways. Plays a role in the regulation of blood glucose homeostasis by deacetylating and stabilizing phosphoenolpyruvate carboxykinase PCK1 activity in response to low nutrient availability. Acts as a key regulator in the pentose phosphate pathway (PPP) by deacetylating and activating the glucose-6-phosphate G6PD enzyme, and therefore, stimulates the production of cytosolic NADPH to counteract oxidative damage. Maintains energy homeostasis in response to nutrient deprivation as well as energy expenditure by inhibiting adipogenesis and promoting lipolysis. Attenuates adipocyte differentiation by deacetylating and promoting FOXO1 interaction to PPARG and subsequent repression of PPARG-dependent transcriptional activity. Plays a role in the regulation of lysosome-mediated degradation of protein aggregates by autophagy in neuronal cells. Deacetylates FOXO1 in response to oxidative stress or serum deprivation, thereby negatively regulating FOXO1-mediated autophagy (By similarity). Deacetylates a broad range of transcription factors and co-regulators regulating target gene expression. Deacetylates transcriptional factor FOXO3 stimulating the ubiquitin ligase SCF(SKP2)-mediated FOXO3 ubiquitination and degradation (By similarity). Deacetylates HIF1A and therefore promotes HIF1A degradation and inhibition of HIF1A transcriptional activity in tumor cells in response to hypoxia. Deacetylates RELA in the cytoplasm inhibiting NF-kappaB-dependent transcription activation upon TNF-alpha stimulation. Inhibits transcriptional activation by deacetylating p53/TP53 and EP300. Also deacetylates EIF5A. Functions as a negative regulator on oxidative stress-tolerance in response to anoxia-reoxygenation conditions. Plays a role as tumor suppressor (PubMed:22943040). In addition to protein deacetylase activity, also has activity toward long-chain fatty acyl groups and mediates protein-lysine demyristoylation and depalmitoylation of target proteins, such as ARF6 and KRAS, thereby regulating their association with membranes (By similarity).</text>
</comment>
<comment type="catalytic activity">
    <reaction evidence="4 11">
        <text>N(6)-acetyl-L-lysyl-[protein] + NAD(+) + H2O = 2''-O-acetyl-ADP-D-ribose + nicotinamide + L-lysyl-[protein]</text>
        <dbReference type="Rhea" id="RHEA:43636"/>
        <dbReference type="Rhea" id="RHEA-COMP:9752"/>
        <dbReference type="Rhea" id="RHEA-COMP:10731"/>
        <dbReference type="ChEBI" id="CHEBI:15377"/>
        <dbReference type="ChEBI" id="CHEBI:17154"/>
        <dbReference type="ChEBI" id="CHEBI:29969"/>
        <dbReference type="ChEBI" id="CHEBI:57540"/>
        <dbReference type="ChEBI" id="CHEBI:61930"/>
        <dbReference type="ChEBI" id="CHEBI:83767"/>
        <dbReference type="EC" id="2.3.1.286"/>
    </reaction>
</comment>
<comment type="catalytic activity">
    <reaction evidence="2">
        <text>N(6)-tetradecanoyl-L-lysyl-[protein] + NAD(+) + H2O = 2''-O-tetradecanoyl-ADP-D-ribose + nicotinamide + L-lysyl-[protein]</text>
        <dbReference type="Rhea" id="RHEA:70567"/>
        <dbReference type="Rhea" id="RHEA-COMP:9752"/>
        <dbReference type="Rhea" id="RHEA-COMP:15437"/>
        <dbReference type="ChEBI" id="CHEBI:15377"/>
        <dbReference type="ChEBI" id="CHEBI:17154"/>
        <dbReference type="ChEBI" id="CHEBI:29969"/>
        <dbReference type="ChEBI" id="CHEBI:57540"/>
        <dbReference type="ChEBI" id="CHEBI:141129"/>
        <dbReference type="ChEBI" id="CHEBI:189674"/>
    </reaction>
    <physiologicalReaction direction="left-to-right" evidence="2">
        <dbReference type="Rhea" id="RHEA:70568"/>
    </physiologicalReaction>
</comment>
<comment type="catalytic activity">
    <reaction evidence="2">
        <text>N(6)-hexadecanoyl-L-lysyl-[protein] + NAD(+) + H2O = 2''-O-hexadecanoyl-ADP-D-ribose + nicotinamide + L-lysyl-[protein]</text>
        <dbReference type="Rhea" id="RHEA:70563"/>
        <dbReference type="Rhea" id="RHEA-COMP:9752"/>
        <dbReference type="Rhea" id="RHEA-COMP:14175"/>
        <dbReference type="ChEBI" id="CHEBI:15377"/>
        <dbReference type="ChEBI" id="CHEBI:17154"/>
        <dbReference type="ChEBI" id="CHEBI:29969"/>
        <dbReference type="ChEBI" id="CHEBI:57540"/>
        <dbReference type="ChEBI" id="CHEBI:138936"/>
        <dbReference type="ChEBI" id="CHEBI:189673"/>
    </reaction>
    <physiologicalReaction direction="left-to-right" evidence="2">
        <dbReference type="Rhea" id="RHEA:70564"/>
    </physiologicalReaction>
</comment>
<comment type="cofactor">
    <cofactor evidence="2">
        <name>Zn(2+)</name>
        <dbReference type="ChEBI" id="CHEBI:29105"/>
    </cofactor>
    <text evidence="2">Binds 1 zinc ion per subunit.</text>
</comment>
<comment type="activity regulation">
    <text evidence="2">Inhibited by Sirtinol, A3 and M15 small molecules. Inhibited by nicotinamide. Inhibited by a macrocyclic peptide inhibitor S2iL5. Inhibited by EP300-induced acetylation (By similarity).</text>
</comment>
<comment type="subunit">
    <text evidence="2 3">Interacts with CDC20, FOXO3 and FZR1 (By similarity). Associates with microtubules in primary cortical mature neurons (By similarity). Homotrimer. Interacts (via both phosphorylated, unphosphorylated, active or inactive forms) with HDAC6; the interaction is necessary for the complex to interact with alpha-tubulin, suggesting that these proteins belong to a large complex that deacetylates the cytoskeleton. Interacts with FOXO1; the interaction is disrupted upon serum-starvation or oxidative stress, leading to increased level of acetylated FOXO1 and induction of autophagy (By similarity). Interacts with RELA; the interaction occurs in the cytoplasm and is increased in a TNF-alpha-dependent manner. Interacts with HOXA10; the interaction is direct. Interacts with YWHAB and YWHAG; the interactions occur in a AKT-dependent manner and increase SIRT2-dependent TP53 deacetylation. Interacts with MAPK1/ERK2 and MAPK3/ERK1; the interactions increase SIRT2 stability and deacetylation activity. Interacts (phosphorylated form) with KMT5A isoform 2; the interaction is direct, stimulates KMT5A-mediated methyltransferase activity on histone at 'Lys-20' (H4K20me1) and is increased in a H(2)O(2)-induced oxidative stress-dependent manner. Interacts with G6PD; the interaction is enhanced by H(2)O(2) treatment. Interacts with a G1/S-specific cyclin E-CDK2 complex. Interacts with AURKA, CDK5R1 (p35 form) and CDK5 and HIF1A. Interacts with the tRNA ligase SARS1; recruited to the VEGFA promoter via interaction with SARS1 (By similarity). Interacts with BEX4; negatively regulates alpha-tubulin deacetylation by SIRT2 (By similarity).</text>
</comment>
<comment type="subcellular location">
    <subcellularLocation>
        <location evidence="2">Nucleus</location>
    </subcellularLocation>
    <subcellularLocation>
        <location evidence="3">Cytoplasm</location>
        <location evidence="3">Perinuclear region</location>
    </subcellularLocation>
    <subcellularLocation>
        <location evidence="7">Cytoplasm</location>
    </subcellularLocation>
    <subcellularLocation>
        <location evidence="2">Cytoplasm</location>
        <location evidence="2">Cytoskeleton</location>
    </subcellularLocation>
    <subcellularLocation>
        <location evidence="2">Cytoplasm</location>
        <location evidence="2">Cytoskeleton</location>
        <location evidence="2">Microtubule organizing center</location>
        <location evidence="2">Centrosome</location>
    </subcellularLocation>
    <subcellularLocation>
        <location evidence="2">Cytoplasm</location>
        <location evidence="2">Cytoskeleton</location>
        <location evidence="2">Microtubule organizing center</location>
        <location evidence="2">Centrosome</location>
        <location evidence="2">Centriole</location>
    </subcellularLocation>
    <subcellularLocation>
        <location evidence="2">Cytoplasm</location>
        <location evidence="2">Cytoskeleton</location>
        <location evidence="2">Spindle</location>
    </subcellularLocation>
    <subcellularLocation>
        <location evidence="2">Midbody</location>
    </subcellularLocation>
    <subcellularLocation>
        <location evidence="2">Chromosome</location>
    </subcellularLocation>
    <subcellularLocation>
        <location evidence="7">Perikaryon</location>
    </subcellularLocation>
    <subcellularLocation>
        <location evidence="3">Cell projection</location>
    </subcellularLocation>
    <subcellularLocation>
        <location evidence="3">Cell projection</location>
        <location evidence="3">Growth cone</location>
    </subcellularLocation>
    <subcellularLocation>
        <location evidence="7">Myelin membrane</location>
    </subcellularLocation>
    <text evidence="2 3">Localizes in the cytoplasm during most of the cell cycle except in the G2/M transition and during mitosis, where it is localized in association with chromatin and induces deacetylation of histone at 'Lys-16' (H4K16ac). Colocalizes with KMT5A at mitotic foci. Colocalizes with CDK1 at centrosome during prophase and splindle fibers during metaphase. Colocalizes with Aurora kinase AURKA at centrosome during early prophase and in the centrioles and growing mitotic spindle throughout metaphase. Colocalizes with Aurora kinase AURKB during cytokinesis with the midbody. Colocalizes with microtubules (By similarity). Detected in perinuclear foci that may be aggresomes containing misfolded, ubiquitinated proteins (By similarity). Shuttles between the cytoplasm and the nucleus through the CRM1 export pathway. Colocalizes with EP300 in the nucleus. Translocates to the nucleus and chromatin upon bacterium Listeria monocytogenes infection in interphase cells (By similarity). Deacetylates FOXO3 in the cytoplasm. Colocalizes with PLP1 in internodal regions, at paranodal axoglial junction and Schmidt-Lanterman incisures of myelin sheat. Colocalizes with CDK5R1 in the perikaryon, neurites and growth cone of hippocampal neurons. Colocalizes with alpha-tubulin in neuronal growth cone. Localizes in the cytoplasm and nucleus of germinal vesicle (GV) stage oocytes. Colocalizes with alpha-tubulin on the meiotic spindle as the oocytes enter into metaphase, and also during meiotic anaphase and telophase, especially with the midbody. Colocalizes with PARD3 in internodal region of axons (By similarity). Colocalizes with acetylated alpha-tubulin in cell projection processes during primary oligodendrocyte precursor (OLP) differentiation (By similarity).</text>
</comment>
<comment type="tissue specificity">
    <text evidence="7 8">Expressed in the cerebellum, cerebral cortex and cervival spinal cord. Expressed in Purkinje cells, oligodendrocytes and Schwann cells (at protein level). Expressed in the central nervous system (CNS).</text>
</comment>
<comment type="induction">
    <text evidence="6">In oligodendrocytes during differentiation of CG-4 cells.</text>
</comment>
<comment type="PTM">
    <text evidence="2">Phosphorylated at phosphoserine and phosphothreonine. Phosphorylated at Ser-330 by a mitotic kinase CDK1/cyclin B at the G2/M transition; phosphorylation regulates the delay in cell-cycle progression. Phosphorylated at Ser-330 by a mitotic kinase G1/S-specific cyclin E/Cdk2 complex; phosphorylation inactivates SIRT2-mediated alpha-tubulin deacetylation and thereby negatively regulates cell adhesion, cell migration and neurite outgrowth during neuronal differentiation. Phosphorylated by cyclin A/Cdk2 and p35-Cdk5 complexes and to a lesser extent by the cyclin D3/Cdk4 and cyclin B/Cdk1, in vitro. Dephosphorylated at Ser-330 by CDC14A and CDC14B around early anaphase (By similarity).</text>
</comment>
<comment type="PTM">
    <text evidence="2">Acetylated by EP300; acetylation leads both to the decreased of SIRT2-mediated alpha-tubulin deacetylase activity and SIRT2-mediated down-regulation of TP53 transcriptional activity.</text>
</comment>
<comment type="PTM">
    <text evidence="2">Ubiquitinated.</text>
</comment>
<comment type="miscellaneous">
    <text evidence="1">Has some ability to deacetylate histones in vitro, but seeing its subcellular location, this is unlikely in vivo.</text>
</comment>
<comment type="similarity">
    <text evidence="10">Belongs to the sirtuin family. Class I subfamily.</text>
</comment>
<keyword id="KW-0072">Autophagy</keyword>
<keyword id="KW-0131">Cell cycle</keyword>
<keyword id="KW-0132">Cell division</keyword>
<keyword id="KW-1003">Cell membrane</keyword>
<keyword id="KW-0966">Cell projection</keyword>
<keyword id="KW-0158">Chromosome</keyword>
<keyword id="KW-0963">Cytoplasm</keyword>
<keyword id="KW-0206">Cytoskeleton</keyword>
<keyword id="KW-0221">Differentiation</keyword>
<keyword id="KW-0903">Direct protein sequencing</keyword>
<keyword id="KW-0469">Meiosis</keyword>
<keyword id="KW-0472">Membrane</keyword>
<keyword id="KW-0479">Metal-binding</keyword>
<keyword id="KW-0493">Microtubule</keyword>
<keyword id="KW-0498">Mitosis</keyword>
<keyword id="KW-0520">NAD</keyword>
<keyword id="KW-0524">Neurogenesis</keyword>
<keyword id="KW-0539">Nucleus</keyword>
<keyword id="KW-0597">Phosphoprotein</keyword>
<keyword id="KW-1185">Reference proteome</keyword>
<keyword id="KW-0804">Transcription</keyword>
<keyword id="KW-0805">Transcription regulation</keyword>
<keyword id="KW-0808">Transferase</keyword>
<keyword id="KW-0832">Ubl conjugation</keyword>
<keyword id="KW-0862">Zinc</keyword>
<organism>
    <name type="scientific">Rattus norvegicus</name>
    <name type="common">Rat</name>
    <dbReference type="NCBI Taxonomy" id="10116"/>
    <lineage>
        <taxon>Eukaryota</taxon>
        <taxon>Metazoa</taxon>
        <taxon>Chordata</taxon>
        <taxon>Craniata</taxon>
        <taxon>Vertebrata</taxon>
        <taxon>Euteleostomi</taxon>
        <taxon>Mammalia</taxon>
        <taxon>Eutheria</taxon>
        <taxon>Euarchontoglires</taxon>
        <taxon>Glires</taxon>
        <taxon>Rodentia</taxon>
        <taxon>Myomorpha</taxon>
        <taxon>Muroidea</taxon>
        <taxon>Muridae</taxon>
        <taxon>Murinae</taxon>
        <taxon>Rattus</taxon>
    </lineage>
</organism>
<evidence type="ECO:0000250" key="1"/>
<evidence type="ECO:0000250" key="2">
    <source>
        <dbReference type="UniProtKB" id="Q8IXJ6"/>
    </source>
</evidence>
<evidence type="ECO:0000250" key="3">
    <source>
        <dbReference type="UniProtKB" id="Q8VDQ8"/>
    </source>
</evidence>
<evidence type="ECO:0000255" key="4">
    <source>
        <dbReference type="PROSITE-ProRule" id="PRU00236"/>
    </source>
</evidence>
<evidence type="ECO:0000256" key="5">
    <source>
        <dbReference type="SAM" id="MobiDB-lite"/>
    </source>
</evidence>
<evidence type="ECO:0000269" key="6">
    <source>
    </source>
</evidence>
<evidence type="ECO:0000269" key="7">
    <source>
    </source>
</evidence>
<evidence type="ECO:0000269" key="8">
    <source>
    </source>
</evidence>
<evidence type="ECO:0000269" key="9">
    <source>
    </source>
</evidence>
<evidence type="ECO:0000305" key="10"/>
<evidence type="ECO:0000305" key="11">
    <source>
    </source>
</evidence>
<evidence type="ECO:0007744" key="12">
    <source>
    </source>
</evidence>
<sequence length="350" mass="39319">MDFLRNLFTQTLGLGSQKERLLDELTLEGVTRYMQSERCRRVICLVGAGISTSAGIPDFRSPSTGLYANLEKYHLPYPEAIFEISYFKKHPEPFFALAKELYPGQFKPTICHYFIRLLKEKGLLLRCYTQNIDTLERVAGLEPQDLVEAHGTFYTSHCVNTSCGKEYTMSWMKEKIFSEATPKCEKCQNVVKPDIVFFGENLPPRFFSCMQSDFSKVDLLIIMGTSLQVQPFASLISKAPLATPRLLINKEKTGQTDPFLGMMMGLGGGMDFDSKKAYRDVAWLGDCDQGCLALADLLGWKELEDLVRREHANIDAQSGSQASNPSATVSPRKSPPPAKEAARTKEKEEH</sequence>
<proteinExistence type="evidence at protein level"/>